<comment type="function">
    <text evidence="3">Binds to muscle nicotinic acetylcholine receptor (nAChR) and inhibit acetylcholine from binding to the receptor, thereby impairing neuromuscular transmission.</text>
</comment>
<comment type="subcellular location">
    <subcellularLocation>
        <location evidence="1">Secreted</location>
    </subcellularLocation>
</comment>
<comment type="tissue specificity">
    <text evidence="5">Expressed by the venom gland.</text>
</comment>
<comment type="similarity">
    <text evidence="5">Belongs to the three-finger toxin family. Short-chain subfamily. Type I alpha-neurotoxin sub-subfamily.</text>
</comment>
<dbReference type="EMBL" id="DQ508410">
    <property type="status" value="NOT_ANNOTATED_CDS"/>
    <property type="molecule type" value="mRNA"/>
</dbReference>
<dbReference type="SMR" id="P0C555"/>
<dbReference type="GO" id="GO:0005576">
    <property type="term" value="C:extracellular region"/>
    <property type="evidence" value="ECO:0007669"/>
    <property type="project" value="UniProtKB-SubCell"/>
</dbReference>
<dbReference type="GO" id="GO:0030550">
    <property type="term" value="F:acetylcholine receptor inhibitor activity"/>
    <property type="evidence" value="ECO:0007669"/>
    <property type="project" value="UniProtKB-KW"/>
</dbReference>
<dbReference type="GO" id="GO:0099106">
    <property type="term" value="F:ion channel regulator activity"/>
    <property type="evidence" value="ECO:0007669"/>
    <property type="project" value="UniProtKB-KW"/>
</dbReference>
<dbReference type="GO" id="GO:0090729">
    <property type="term" value="F:toxin activity"/>
    <property type="evidence" value="ECO:0007669"/>
    <property type="project" value="UniProtKB-KW"/>
</dbReference>
<dbReference type="CDD" id="cd00206">
    <property type="entry name" value="TFP_snake_toxin"/>
    <property type="match status" value="1"/>
</dbReference>
<dbReference type="FunFam" id="2.10.60.10:FF:000024">
    <property type="entry name" value="Cytotoxin 1"/>
    <property type="match status" value="1"/>
</dbReference>
<dbReference type="Gene3D" id="2.10.60.10">
    <property type="entry name" value="CD59"/>
    <property type="match status" value="1"/>
</dbReference>
<dbReference type="InterPro" id="IPR003571">
    <property type="entry name" value="Snake_3FTx"/>
</dbReference>
<dbReference type="InterPro" id="IPR045860">
    <property type="entry name" value="Snake_toxin-like_sf"/>
</dbReference>
<dbReference type="InterPro" id="IPR018354">
    <property type="entry name" value="Snake_toxin_con_site"/>
</dbReference>
<dbReference type="InterPro" id="IPR054131">
    <property type="entry name" value="Toxin_cobra-type"/>
</dbReference>
<dbReference type="Pfam" id="PF21947">
    <property type="entry name" value="Toxin_cobra-type"/>
    <property type="match status" value="1"/>
</dbReference>
<dbReference type="SUPFAM" id="SSF57302">
    <property type="entry name" value="Snake toxin-like"/>
    <property type="match status" value="1"/>
</dbReference>
<dbReference type="PROSITE" id="PS00272">
    <property type="entry name" value="SNAKE_TOXIN"/>
    <property type="match status" value="1"/>
</dbReference>
<evidence type="ECO:0000250" key="1"/>
<evidence type="ECO:0000250" key="2">
    <source>
        <dbReference type="UniProtKB" id="P0C1Z0"/>
    </source>
</evidence>
<evidence type="ECO:0000250" key="3">
    <source>
        <dbReference type="UniProtKB" id="P60775"/>
    </source>
</evidence>
<evidence type="ECO:0000255" key="4"/>
<evidence type="ECO:0000305" key="5"/>
<name>3S1RI_BUNFA</name>
<sequence length="83" mass="9256">MKTLLLTLVVLTIVCLDLGHTRICLNQQSSEPQTTETCPNGEDTCYNKTWNTHRGSRTDRGCGCPKVKPGINLRCCKTDKCNQ</sequence>
<feature type="signal peptide" evidence="4">
    <location>
        <begin position="1"/>
        <end position="21"/>
    </location>
</feature>
<feature type="chain" id="PRO_0000293107" description="Neurotoxin 3FTx-RI">
    <location>
        <begin position="22"/>
        <end position="83"/>
    </location>
</feature>
<feature type="disulfide bond" evidence="2">
    <location>
        <begin position="24"/>
        <end position="45"/>
    </location>
</feature>
<feature type="disulfide bond" evidence="2">
    <location>
        <begin position="38"/>
        <end position="62"/>
    </location>
</feature>
<feature type="disulfide bond" evidence="2">
    <location>
        <begin position="64"/>
        <end position="75"/>
    </location>
</feature>
<feature type="disulfide bond" evidence="2">
    <location>
        <begin position="76"/>
        <end position="81"/>
    </location>
</feature>
<protein>
    <recommendedName>
        <fullName>Neurotoxin 3FTx-RI</fullName>
    </recommendedName>
</protein>
<reference key="1">
    <citation type="journal article" date="2007" name="FEBS J.">
        <title>Sequences, geographic variations and molecular phylogeny of venom phospholipases and three-finger toxins of eastern India Bungarus fasciatus and kinetic analyses of its Pro31 phospholipases A2.</title>
        <authorList>
            <person name="Tsai I.-H."/>
            <person name="Tsai H.-Y."/>
            <person name="Saha A."/>
            <person name="Gomes A."/>
        </authorList>
    </citation>
    <scope>NUCLEOTIDE SEQUENCE [MRNA]</scope>
    <source>
        <tissue>Venom gland</tissue>
    </source>
</reference>
<proteinExistence type="inferred from homology"/>
<organism>
    <name type="scientific">Bungarus fasciatus</name>
    <name type="common">Banded krait</name>
    <name type="synonym">Pseudoboa fasciata</name>
    <dbReference type="NCBI Taxonomy" id="8613"/>
    <lineage>
        <taxon>Eukaryota</taxon>
        <taxon>Metazoa</taxon>
        <taxon>Chordata</taxon>
        <taxon>Craniata</taxon>
        <taxon>Vertebrata</taxon>
        <taxon>Euteleostomi</taxon>
        <taxon>Lepidosauria</taxon>
        <taxon>Squamata</taxon>
        <taxon>Bifurcata</taxon>
        <taxon>Unidentata</taxon>
        <taxon>Episquamata</taxon>
        <taxon>Toxicofera</taxon>
        <taxon>Serpentes</taxon>
        <taxon>Colubroidea</taxon>
        <taxon>Elapidae</taxon>
        <taxon>Bungarinae</taxon>
        <taxon>Bungarus</taxon>
    </lineage>
</organism>
<accession>P0C555</accession>
<keyword id="KW-0008">Acetylcholine receptor inhibiting toxin</keyword>
<keyword id="KW-1015">Disulfide bond</keyword>
<keyword id="KW-0872">Ion channel impairing toxin</keyword>
<keyword id="KW-0528">Neurotoxin</keyword>
<keyword id="KW-0629">Postsynaptic neurotoxin</keyword>
<keyword id="KW-0964">Secreted</keyword>
<keyword id="KW-0732">Signal</keyword>
<keyword id="KW-0800">Toxin</keyword>